<proteinExistence type="inferred from homology"/>
<keyword id="KW-0963">Cytoplasm</keyword>
<keyword id="KW-0378">Hydrolase</keyword>
<keyword id="KW-1185">Reference proteome</keyword>
<keyword id="KW-0694">RNA-binding</keyword>
<keyword id="KW-0820">tRNA-binding</keyword>
<protein>
    <recommendedName>
        <fullName evidence="1">Peptidyl-tRNA hydrolase</fullName>
        <shortName evidence="1">Pth</shortName>
        <ecNumber evidence="1">3.1.1.29</ecNumber>
    </recommendedName>
</protein>
<evidence type="ECO:0000255" key="1">
    <source>
        <dbReference type="HAMAP-Rule" id="MF_00083"/>
    </source>
</evidence>
<dbReference type="EC" id="3.1.1.29" evidence="1"/>
<dbReference type="EMBL" id="AM233362">
    <property type="protein sequence ID" value="CAJ79395.1"/>
    <property type="molecule type" value="Genomic_DNA"/>
</dbReference>
<dbReference type="RefSeq" id="WP_003015752.1">
    <property type="nucleotide sequence ID" value="NZ_CP009694.1"/>
</dbReference>
<dbReference type="SMR" id="Q2A3N5"/>
<dbReference type="KEGG" id="ftl:FTL_0956"/>
<dbReference type="Proteomes" id="UP000001944">
    <property type="component" value="Chromosome"/>
</dbReference>
<dbReference type="GO" id="GO:0005737">
    <property type="term" value="C:cytoplasm"/>
    <property type="evidence" value="ECO:0007669"/>
    <property type="project" value="UniProtKB-SubCell"/>
</dbReference>
<dbReference type="GO" id="GO:0004045">
    <property type="term" value="F:peptidyl-tRNA hydrolase activity"/>
    <property type="evidence" value="ECO:0007669"/>
    <property type="project" value="UniProtKB-UniRule"/>
</dbReference>
<dbReference type="GO" id="GO:0000049">
    <property type="term" value="F:tRNA binding"/>
    <property type="evidence" value="ECO:0007669"/>
    <property type="project" value="UniProtKB-UniRule"/>
</dbReference>
<dbReference type="GO" id="GO:0006515">
    <property type="term" value="P:protein quality control for misfolded or incompletely synthesized proteins"/>
    <property type="evidence" value="ECO:0007669"/>
    <property type="project" value="UniProtKB-UniRule"/>
</dbReference>
<dbReference type="GO" id="GO:0072344">
    <property type="term" value="P:rescue of stalled ribosome"/>
    <property type="evidence" value="ECO:0007669"/>
    <property type="project" value="UniProtKB-UniRule"/>
</dbReference>
<dbReference type="CDD" id="cd00462">
    <property type="entry name" value="PTH"/>
    <property type="match status" value="1"/>
</dbReference>
<dbReference type="FunFam" id="3.40.50.1470:FF:000001">
    <property type="entry name" value="Peptidyl-tRNA hydrolase"/>
    <property type="match status" value="1"/>
</dbReference>
<dbReference type="Gene3D" id="3.40.50.1470">
    <property type="entry name" value="Peptidyl-tRNA hydrolase"/>
    <property type="match status" value="1"/>
</dbReference>
<dbReference type="HAMAP" id="MF_00083">
    <property type="entry name" value="Pept_tRNA_hydro_bact"/>
    <property type="match status" value="1"/>
</dbReference>
<dbReference type="InterPro" id="IPR001328">
    <property type="entry name" value="Pept_tRNA_hydro"/>
</dbReference>
<dbReference type="InterPro" id="IPR018171">
    <property type="entry name" value="Pept_tRNA_hydro_CS"/>
</dbReference>
<dbReference type="InterPro" id="IPR036416">
    <property type="entry name" value="Pept_tRNA_hydro_sf"/>
</dbReference>
<dbReference type="NCBIfam" id="TIGR00447">
    <property type="entry name" value="pth"/>
    <property type="match status" value="1"/>
</dbReference>
<dbReference type="PANTHER" id="PTHR17224">
    <property type="entry name" value="PEPTIDYL-TRNA HYDROLASE"/>
    <property type="match status" value="1"/>
</dbReference>
<dbReference type="PANTHER" id="PTHR17224:SF1">
    <property type="entry name" value="PEPTIDYL-TRNA HYDROLASE"/>
    <property type="match status" value="1"/>
</dbReference>
<dbReference type="Pfam" id="PF01195">
    <property type="entry name" value="Pept_tRNA_hydro"/>
    <property type="match status" value="1"/>
</dbReference>
<dbReference type="SUPFAM" id="SSF53178">
    <property type="entry name" value="Peptidyl-tRNA hydrolase-like"/>
    <property type="match status" value="1"/>
</dbReference>
<dbReference type="PROSITE" id="PS01196">
    <property type="entry name" value="PEPT_TRNA_HYDROL_2"/>
    <property type="match status" value="1"/>
</dbReference>
<comment type="function">
    <text evidence="1">Hydrolyzes ribosome-free peptidyl-tRNAs (with 1 or more amino acids incorporated), which drop off the ribosome during protein synthesis, or as a result of ribosome stalling.</text>
</comment>
<comment type="function">
    <text evidence="1">Catalyzes the release of premature peptidyl moieties from peptidyl-tRNA molecules trapped in stalled 50S ribosomal subunits, and thus maintains levels of free tRNAs and 50S ribosomes.</text>
</comment>
<comment type="catalytic activity">
    <reaction evidence="1">
        <text>an N-acyl-L-alpha-aminoacyl-tRNA + H2O = an N-acyl-L-amino acid + a tRNA + H(+)</text>
        <dbReference type="Rhea" id="RHEA:54448"/>
        <dbReference type="Rhea" id="RHEA-COMP:10123"/>
        <dbReference type="Rhea" id="RHEA-COMP:13883"/>
        <dbReference type="ChEBI" id="CHEBI:15377"/>
        <dbReference type="ChEBI" id="CHEBI:15378"/>
        <dbReference type="ChEBI" id="CHEBI:59874"/>
        <dbReference type="ChEBI" id="CHEBI:78442"/>
        <dbReference type="ChEBI" id="CHEBI:138191"/>
        <dbReference type="EC" id="3.1.1.29"/>
    </reaction>
</comment>
<comment type="subunit">
    <text evidence="1">Monomer.</text>
</comment>
<comment type="subcellular location">
    <subcellularLocation>
        <location evidence="1">Cytoplasm</location>
    </subcellularLocation>
</comment>
<comment type="similarity">
    <text evidence="1">Belongs to the PTH family.</text>
</comment>
<sequence length="191" mass="21099">MPKIKMIVGLGNIGKEYQDTRHNVGEWFIAKIAQDNNQSFSSNTKLNCNLAKVSIDYNNVVLVFPTTYMNNSGLAVSKVANFYKIAPAEILVAHDELDIDSGEIRLKKGGGHGGHNGLRSINQHLGTNDYLRLRIGIGHPGHKSKVANYVLSNPSIAQKKDIDSAIDNGICFLDDIINYKLEPVMQKLHTK</sequence>
<accession>Q2A3N5</accession>
<organism>
    <name type="scientific">Francisella tularensis subsp. holarctica (strain LVS)</name>
    <dbReference type="NCBI Taxonomy" id="376619"/>
    <lineage>
        <taxon>Bacteria</taxon>
        <taxon>Pseudomonadati</taxon>
        <taxon>Pseudomonadota</taxon>
        <taxon>Gammaproteobacteria</taxon>
        <taxon>Thiotrichales</taxon>
        <taxon>Francisellaceae</taxon>
        <taxon>Francisella</taxon>
    </lineage>
</organism>
<name>PTH_FRATH</name>
<gene>
    <name evidence="1" type="primary">pth</name>
    <name type="ordered locus">FTL_0956</name>
</gene>
<reference key="1">
    <citation type="submission" date="2006-03" db="EMBL/GenBank/DDBJ databases">
        <title>Complete genome sequence of Francisella tularensis LVS (Live Vaccine Strain).</title>
        <authorList>
            <person name="Chain P."/>
            <person name="Larimer F."/>
            <person name="Land M."/>
            <person name="Stilwagen S."/>
            <person name="Larsson P."/>
            <person name="Bearden S."/>
            <person name="Chu M."/>
            <person name="Oyston P."/>
            <person name="Forsman M."/>
            <person name="Andersson S."/>
            <person name="Lindler L."/>
            <person name="Titball R."/>
            <person name="Garcia E."/>
        </authorList>
    </citation>
    <scope>NUCLEOTIDE SEQUENCE [LARGE SCALE GENOMIC DNA]</scope>
    <source>
        <strain>LVS</strain>
    </source>
</reference>
<feature type="chain" id="PRO_0000264038" description="Peptidyl-tRNA hydrolase">
    <location>
        <begin position="1"/>
        <end position="191"/>
    </location>
</feature>
<feature type="active site" description="Proton acceptor" evidence="1">
    <location>
        <position position="22"/>
    </location>
</feature>
<feature type="binding site" evidence="1">
    <location>
        <position position="17"/>
    </location>
    <ligand>
        <name>tRNA</name>
        <dbReference type="ChEBI" id="CHEBI:17843"/>
    </ligand>
</feature>
<feature type="binding site" evidence="1">
    <location>
        <position position="68"/>
    </location>
    <ligand>
        <name>tRNA</name>
        <dbReference type="ChEBI" id="CHEBI:17843"/>
    </ligand>
</feature>
<feature type="binding site" evidence="1">
    <location>
        <position position="70"/>
    </location>
    <ligand>
        <name>tRNA</name>
        <dbReference type="ChEBI" id="CHEBI:17843"/>
    </ligand>
</feature>
<feature type="binding site" evidence="1">
    <location>
        <position position="116"/>
    </location>
    <ligand>
        <name>tRNA</name>
        <dbReference type="ChEBI" id="CHEBI:17843"/>
    </ligand>
</feature>
<feature type="site" description="Discriminates between blocked and unblocked aminoacyl-tRNA" evidence="1">
    <location>
        <position position="12"/>
    </location>
</feature>
<feature type="site" description="Stabilizes the basic form of H active site to accept a proton" evidence="1">
    <location>
        <position position="95"/>
    </location>
</feature>